<dbReference type="EMBL" id="LK023129">
    <property type="protein sequence ID" value="VUC58481.1"/>
    <property type="molecule type" value="Genomic_DNA"/>
</dbReference>
<dbReference type="RefSeq" id="XP_034424244.1">
    <property type="nucleotide sequence ID" value="XM_034567781.1"/>
</dbReference>
<dbReference type="FunCoup" id="A0A509AVL8">
    <property type="interactions" value="3"/>
</dbReference>
<dbReference type="STRING" id="5823.A0A509AVL8"/>
<dbReference type="GeneID" id="55152459"/>
<dbReference type="VEuPathDB" id="PlasmoDB:PBANKA_1442000"/>
<dbReference type="InParanoid" id="A0A509AVL8"/>
<dbReference type="OMA" id="ICPSIIY"/>
<dbReference type="Proteomes" id="UP000074855">
    <property type="component" value="Chromosome 14"/>
</dbReference>
<dbReference type="GO" id="GO:0016020">
    <property type="term" value="C:membrane"/>
    <property type="evidence" value="ECO:0007669"/>
    <property type="project" value="UniProtKB-SubCell"/>
</dbReference>
<dbReference type="GO" id="GO:0005267">
    <property type="term" value="F:potassium channel activity"/>
    <property type="evidence" value="ECO:0007669"/>
    <property type="project" value="UniProtKB-KW"/>
</dbReference>
<dbReference type="Gene3D" id="1.10.287.70">
    <property type="match status" value="1"/>
</dbReference>
<dbReference type="Gene3D" id="1.20.120.350">
    <property type="entry name" value="Voltage-gated potassium channels. Chain C"/>
    <property type="match status" value="1"/>
</dbReference>
<dbReference type="InterPro" id="IPR013099">
    <property type="entry name" value="K_chnl_dom"/>
</dbReference>
<dbReference type="InterPro" id="IPR047871">
    <property type="entry name" value="K_chnl_Slo-like"/>
</dbReference>
<dbReference type="InterPro" id="IPR003148">
    <property type="entry name" value="RCK_N"/>
</dbReference>
<dbReference type="InterPro" id="IPR027359">
    <property type="entry name" value="Volt_channel_dom_sf"/>
</dbReference>
<dbReference type="PANTHER" id="PTHR10027">
    <property type="entry name" value="CALCIUM-ACTIVATED POTASSIUM CHANNEL ALPHA CHAIN"/>
    <property type="match status" value="1"/>
</dbReference>
<dbReference type="PANTHER" id="PTHR10027:SF10">
    <property type="entry name" value="SLOWPOKE 2, ISOFORM D"/>
    <property type="match status" value="1"/>
</dbReference>
<dbReference type="Pfam" id="PF07885">
    <property type="entry name" value="Ion_trans_2"/>
    <property type="match status" value="1"/>
</dbReference>
<dbReference type="Pfam" id="PF22614">
    <property type="entry name" value="Slo-like_RCK"/>
    <property type="match status" value="1"/>
</dbReference>
<dbReference type="SUPFAM" id="SSF81324">
    <property type="entry name" value="Voltage-gated potassium channels"/>
    <property type="match status" value="1"/>
</dbReference>
<proteinExistence type="inferred from homology"/>
<organism evidence="8">
    <name type="scientific">Plasmodium berghei (strain Anka)</name>
    <dbReference type="NCBI Taxonomy" id="5823"/>
    <lineage>
        <taxon>Eukaryota</taxon>
        <taxon>Sar</taxon>
        <taxon>Alveolata</taxon>
        <taxon>Apicomplexa</taxon>
        <taxon>Aconoidasida</taxon>
        <taxon>Haemosporida</taxon>
        <taxon>Plasmodiidae</taxon>
        <taxon>Plasmodium</taxon>
        <taxon>Plasmodium (Vinckeia)</taxon>
    </lineage>
</organism>
<accession>A0A509AVL8</accession>
<gene>
    <name evidence="8" type="ORF">PBANKA_1442000</name>
</gene>
<sequence length="1936" mass="228142">MFANKTEKRNVQNKHKYIDGGKLSKDKDKIDETGSNTEKYIKIDNASKKEIIIFSKNSELIDNKKIKEINENGYNKLKINTHDEFNITKKKMKNSNDNIIYNSPNSKIKVVSNNNFKDRKKGMNHKKKKGISINQITLFKIHNYIYKTFVFLLCLFIVILVLYASIDISQNYGPIIILYIIMLEFGSMLISYILLQFPFFYLILKNMFTRTSNINKYSHQYSPLYYENPSDSDDKDSIDVKRRETKQRRKTFGFFNLNNIDHNKYSIKKNILPTKLKVYNKEESDKYEYGNLNHVLNTNLSNTKSRSADEAENYIIEDTNMNHNGENVNNKSKKGNQPIKIRNHKRENIYLDDCNMWIRNSIKKSRVKGNFNLTRSLSFNIKLSENNVILNDSRNIDNLRIYLNHRSSKYEKKKNQIKPLKLFAYNKYAPLTFSTPYKYNVPSDIFKTNTGESKILSAEISESSNDVNGLLHKNNDKSYSEEKYHLDKRKTDNEFYTGKSAILFSNKHTKQYMRKKTFMYDDLDSLNIYKNKKHNRKNKKKSIFCKIKCFNKIKNILFFFVNYNIKSSKTQNTMLLFFRGLTLYIKHQFIQHLSYEPVWIIAILIRIILWCIVWLWAAGYMTRPPKNYKINAWNMKSIPPLYGYIECTFQWCGVLDYLFGLYFSNNKLKYIFSFFSLIDFITTPVSSFIMNFLWQNDYHQTYWFLILGPLRFLRLVRAESTMSSCFFWLSDVKIIIIGIIILSLAILFTFSGIMYILEAPDIERQFISPLDFVYFGVITMSTVGYGDYTPVTPAGKCLTMFIIVTCFTFVGAQLKRLKEAMFSPKTIMGIIPKPDDDYILILGPVSPIQLLYICKGINNSFPNSVESIFLFTPLPVIIYRYVYGSIIKNTNIKICINGGNECFICPSIIYDAVINARALYILNNVDSEKYTLLNQQIFLASNNFNFNNNDKNQRIRPEDILHNNIINKFTGDKKKTWKFTDIYSEHKNQINKNNMLNLEMNINVNDSHMIREKDDQECILRFIGTYNISNALIPITVQLSNNTYEELIKSMNVYNYISIEELKYALLAKSINCKGLFFLIINFFYKPKAVKSLKKYIIDLRLLMYNNILKKKNHKKINSTNIKIKTFNELSSSHSENKLSDTSSMINYKSKSRVNYKMVKGTKNEFIRNQNYNINSIYYANNDNMHNEQNNNINDDDDAFKMIGCENDDNFLYNSYRNTYGINNNIQHYKSNSSKSFYNNKKSGNYNEGNTSFSKTVGSMNSSQDVPSKNYYNILEKISLNMYYYLEGLKYNIYRFQFPECMRGFLFQTASEYLYQKHGAFLIGIITINKEIFLNPIDYIIGEENKYYYTSAFSGIILTTSLDNLIKLSSIKYISKKVSEYNQRRINERRKRYAKNTVSTDGENGYSKDLGFSEKNNNNYENIEKNKNIDKWQNSIISKQNTSIMHREDNKINKLDKSIEQNTNIYKINDKDNTDNNEDKNSKINKNNSNFKMEIISKKNKLILYNFVLGIYEVDNYVSAYRDIFDDKRKPLLLICGWPDNIHMLLKHLKINIYKTMKYKKKNRIQNGNDEYNNNNDKINRNYRSYGDRMKYNIIILSIHVPKFNYENDLLDFSNNTAFIRGSSMDSTNLIKGGIFYAKRIIILNSNHSLFVDKDAYRIDNEVIIIKNVIYQLYNNIFKNKKIYLEIIKKIFKKEYTDKYINEKIIFDTNIENNNKHDEFQNDSYTSNSDSENKMVNKQKNKINYNIFNVNKNPYIICLIKNSESLEYIDGSINLSYENYNDNEKMNKIWENCGEYIYTFELVSANIFVDEMLHNLVSFSLPISKYAIEYSVIYSLIGININEYSKNVNMFHKNLKLSTGHVLIIPIPSYFYKKPFYRCFFYLLHKKKYLCIGILRYINISPLRNISRKLFILSCPSRTMKIEHYDQAYVIAYNTV</sequence>
<reference evidence="8" key="1">
    <citation type="journal article" date="2014" name="BMC Biol.">
        <title>A comprehensive evaluation of rodent malaria parasite genomes and gene expression.</title>
        <authorList>
            <person name="Otto T.D."/>
            <person name="Bohme U."/>
            <person name="Jackson A.P."/>
            <person name="Hunt M."/>
            <person name="Franke-Fayard B."/>
            <person name="Hoeijmakers W.A."/>
            <person name="Religa A.A."/>
            <person name="Robertson L."/>
            <person name="Sanders M."/>
            <person name="Ogun S.A."/>
            <person name="Cunningham D."/>
            <person name="Erhart A."/>
            <person name="Billker O."/>
            <person name="Khan S.M."/>
            <person name="Stunnenberg H.G."/>
            <person name="Langhorne J."/>
            <person name="Holder A.A."/>
            <person name="Waters A.P."/>
            <person name="Newbold C.I."/>
            <person name="Pain A."/>
            <person name="Berriman M."/>
            <person name="Janse C.J."/>
        </authorList>
    </citation>
    <scope>NUCLEOTIDE SEQUENCE [LARGE SCALE GENOMIC DNA]</scope>
    <source>
        <strain evidence="8">ANKA</strain>
    </source>
</reference>
<reference evidence="6" key="2">
    <citation type="journal article" date="2008" name="Proc. Natl. Acad. Sci. U.S.A.">
        <title>Critical role of a K+ channel in Plasmodium berghei transmission revealed by targeted gene disruption.</title>
        <authorList>
            <person name="Ellekvist P."/>
            <person name="Maciel J."/>
            <person name="Mlambo G."/>
            <person name="Ricke C.H."/>
            <person name="Colding H."/>
            <person name="Klaerke D.A."/>
            <person name="Kumar N."/>
        </authorList>
    </citation>
    <scope>FUNCTION</scope>
    <scope>TRANSPORTER ACTIVITY</scope>
    <scope>ACTIVITY REGULATION</scope>
    <scope>DISRUPTION PHENOTYPE</scope>
</reference>
<reference evidence="6" key="3">
    <citation type="journal article" date="2017" name="Biochem. Biophys. Res. Commun.">
        <title>Functional characterization of malaria parasites deficient in the K+ channel Kch2.</title>
        <authorList>
            <person name="Ellekvist P."/>
            <person name="Mlambo G."/>
            <person name="Kumar N."/>
            <person name="Klaerke D.A."/>
        </authorList>
    </citation>
    <scope>FUNCTION</scope>
    <scope>TRANSPORTER ACTIVITY</scope>
    <scope>DISRUPTION PHENOTYPE</scope>
</reference>
<feature type="chain" id="PRO_0000460819" description="Potassium channel K1">
    <location>
        <begin position="1"/>
        <end position="1936"/>
    </location>
</feature>
<feature type="transmembrane region" description="Helical" evidence="1">
    <location>
        <begin position="175"/>
        <end position="195"/>
    </location>
</feature>
<feature type="transmembrane region" description="Helical" evidence="1">
    <location>
        <begin position="598"/>
        <end position="618"/>
    </location>
</feature>
<feature type="transmembrane region" description="Helical" evidence="1">
    <location>
        <begin position="643"/>
        <end position="663"/>
    </location>
</feature>
<feature type="transmembrane region" description="Helical" evidence="1">
    <location>
        <begin position="670"/>
        <end position="690"/>
    </location>
</feature>
<feature type="transmembrane region" description="Helical" evidence="6">
    <location>
        <begin position="701"/>
        <end position="721"/>
    </location>
</feature>
<feature type="transmembrane region" description="Helical" evidence="1">
    <location>
        <begin position="734"/>
        <end position="754"/>
    </location>
</feature>
<feature type="intramembrane region" description="Pore-forming" evidence="5">
    <location>
        <begin position="772"/>
        <end position="788"/>
    </location>
</feature>
<feature type="transmembrane region" description="Helical" evidence="1">
    <location>
        <begin position="791"/>
        <end position="811"/>
    </location>
</feature>
<feature type="coiled-coil region" evidence="1">
    <location>
        <begin position="1141"/>
        <end position="1185"/>
    </location>
</feature>
<comment type="function">
    <text evidence="2 3">Likely a predominant potassium channel in the erythrocytic stages of parasites (PubMed:18434537, PubMed:28864420). Mediates transmembrane potassium transport (PubMed:18434537, PubMed:28864420). Required for the development of oocysts in the mosquito midgut (PubMed:18434537).</text>
</comment>
<comment type="catalytic activity">
    <reaction evidence="2 3">
        <text>K(+)(in) = K(+)(out)</text>
        <dbReference type="Rhea" id="RHEA:29463"/>
        <dbReference type="ChEBI" id="CHEBI:29103"/>
    </reaction>
</comment>
<comment type="activity regulation">
    <text evidence="2">Partially inhibited by Ba(2+) and quinine (PubMed:18434537). Probably insensitive to tetraethylammonium (TEA) (PubMed:18434537).</text>
</comment>
<comment type="subcellular location">
    <subcellularLocation>
        <location evidence="1">Membrane</location>
        <topology evidence="1">Multi-pass membrane protein</topology>
    </subcellularLocation>
</comment>
<comment type="disruption phenotype">
    <text evidence="2 3">Decreased uptake of the K(+) congener 86Rb(+) by parasites (PubMed:18434537, PubMed:28864420). Slightly prolonged survival of infected mice (PubMed:18434537). Inhibition of oocyst development in the midgut of Anopheles stephensi mosquitoes (PubMed:18434537).</text>
</comment>
<protein>
    <recommendedName>
        <fullName evidence="7">Potassium channel K1</fullName>
        <shortName evidence="4">PbKch1</shortName>
    </recommendedName>
</protein>
<name>KCH1_PLABA</name>
<keyword id="KW-0175">Coiled coil</keyword>
<keyword id="KW-0407">Ion channel</keyword>
<keyword id="KW-0406">Ion transport</keyword>
<keyword id="KW-0472">Membrane</keyword>
<keyword id="KW-0630">Potassium</keyword>
<keyword id="KW-0631">Potassium channel</keyword>
<keyword id="KW-0633">Potassium transport</keyword>
<keyword id="KW-1185">Reference proteome</keyword>
<keyword id="KW-0812">Transmembrane</keyword>
<keyword id="KW-1133">Transmembrane helix</keyword>
<keyword id="KW-0813">Transport</keyword>
<evidence type="ECO:0000255" key="1"/>
<evidence type="ECO:0000269" key="2">
    <source>
    </source>
</evidence>
<evidence type="ECO:0000269" key="3">
    <source>
    </source>
</evidence>
<evidence type="ECO:0000303" key="4">
    <source>
    </source>
</evidence>
<evidence type="ECO:0000303" key="5">
    <source>
    </source>
</evidence>
<evidence type="ECO:0000305" key="6"/>
<evidence type="ECO:0000312" key="7">
    <source>
        <dbReference type="EMBL" id="VUC58481.1"/>
    </source>
</evidence>
<evidence type="ECO:0000312" key="8">
    <source>
        <dbReference type="Proteomes" id="UP000074855"/>
    </source>
</evidence>